<proteinExistence type="inferred from homology"/>
<evidence type="ECO:0000250" key="1"/>
<evidence type="ECO:0000305" key="2"/>
<accession>O84842</accession>
<organism>
    <name type="scientific">Chlamydia trachomatis serovar D (strain ATCC VR-885 / DSM 19411 / UW-3/Cx)</name>
    <dbReference type="NCBI Taxonomy" id="272561"/>
    <lineage>
        <taxon>Bacteria</taxon>
        <taxon>Pseudomonadati</taxon>
        <taxon>Chlamydiota</taxon>
        <taxon>Chlamydiia</taxon>
        <taxon>Chlamydiales</taxon>
        <taxon>Chlamydiaceae</taxon>
        <taxon>Chlamydia/Chlamydophila group</taxon>
        <taxon>Chlamydia</taxon>
    </lineage>
</organism>
<dbReference type="EMBL" id="AE001273">
    <property type="protein sequence ID" value="AAC68432.1"/>
    <property type="molecule type" value="Genomic_DNA"/>
</dbReference>
<dbReference type="PIR" id="C71465">
    <property type="entry name" value="C71465"/>
</dbReference>
<dbReference type="RefSeq" id="NP_220356.1">
    <property type="nucleotide sequence ID" value="NC_000117.1"/>
</dbReference>
<dbReference type="RefSeq" id="WP_009872222.1">
    <property type="nucleotide sequence ID" value="NC_000117.1"/>
</dbReference>
<dbReference type="SMR" id="O84842"/>
<dbReference type="FunCoup" id="O84842">
    <property type="interactions" value="283"/>
</dbReference>
<dbReference type="STRING" id="272561.CT_835"/>
<dbReference type="EnsemblBacteria" id="AAC68432">
    <property type="protein sequence ID" value="AAC68432"/>
    <property type="gene ID" value="CT_835"/>
</dbReference>
<dbReference type="GeneID" id="884634"/>
<dbReference type="KEGG" id="ctr:CT_835"/>
<dbReference type="PATRIC" id="fig|272561.5.peg.922"/>
<dbReference type="HOGENOM" id="CLU_123265_0_1_0"/>
<dbReference type="InParanoid" id="O84842"/>
<dbReference type="OrthoDB" id="9808966at2"/>
<dbReference type="Proteomes" id="UP000000431">
    <property type="component" value="Chromosome"/>
</dbReference>
<dbReference type="GO" id="GO:0022625">
    <property type="term" value="C:cytosolic large ribosomal subunit"/>
    <property type="evidence" value="ECO:0000318"/>
    <property type="project" value="GO_Central"/>
</dbReference>
<dbReference type="GO" id="GO:0019843">
    <property type="term" value="F:rRNA binding"/>
    <property type="evidence" value="ECO:0007669"/>
    <property type="project" value="UniProtKB-UniRule"/>
</dbReference>
<dbReference type="GO" id="GO:0003735">
    <property type="term" value="F:structural constituent of ribosome"/>
    <property type="evidence" value="ECO:0000318"/>
    <property type="project" value="GO_Central"/>
</dbReference>
<dbReference type="GO" id="GO:0000027">
    <property type="term" value="P:ribosomal large subunit assembly"/>
    <property type="evidence" value="ECO:0007669"/>
    <property type="project" value="UniProtKB-UniRule"/>
</dbReference>
<dbReference type="GO" id="GO:0006412">
    <property type="term" value="P:translation"/>
    <property type="evidence" value="ECO:0007669"/>
    <property type="project" value="InterPro"/>
</dbReference>
<dbReference type="CDD" id="cd07026">
    <property type="entry name" value="Ribosomal_L20"/>
    <property type="match status" value="1"/>
</dbReference>
<dbReference type="FunFam" id="1.10.1900.20:FF:000001">
    <property type="entry name" value="50S ribosomal protein L20"/>
    <property type="match status" value="1"/>
</dbReference>
<dbReference type="Gene3D" id="6.10.160.10">
    <property type="match status" value="1"/>
</dbReference>
<dbReference type="Gene3D" id="1.10.1900.20">
    <property type="entry name" value="Ribosomal protein L20"/>
    <property type="match status" value="1"/>
</dbReference>
<dbReference type="HAMAP" id="MF_00382">
    <property type="entry name" value="Ribosomal_bL20"/>
    <property type="match status" value="1"/>
</dbReference>
<dbReference type="InterPro" id="IPR005813">
    <property type="entry name" value="Ribosomal_bL20"/>
</dbReference>
<dbReference type="InterPro" id="IPR049946">
    <property type="entry name" value="RIBOSOMAL_L20_CS"/>
</dbReference>
<dbReference type="InterPro" id="IPR035566">
    <property type="entry name" value="Ribosomal_protein_bL20_C"/>
</dbReference>
<dbReference type="NCBIfam" id="TIGR01032">
    <property type="entry name" value="rplT_bact"/>
    <property type="match status" value="1"/>
</dbReference>
<dbReference type="PANTHER" id="PTHR10986">
    <property type="entry name" value="39S RIBOSOMAL PROTEIN L20"/>
    <property type="match status" value="1"/>
</dbReference>
<dbReference type="Pfam" id="PF00453">
    <property type="entry name" value="Ribosomal_L20"/>
    <property type="match status" value="1"/>
</dbReference>
<dbReference type="PRINTS" id="PR00062">
    <property type="entry name" value="RIBOSOMALL20"/>
</dbReference>
<dbReference type="SUPFAM" id="SSF74731">
    <property type="entry name" value="Ribosomal protein L20"/>
    <property type="match status" value="1"/>
</dbReference>
<dbReference type="PROSITE" id="PS00937">
    <property type="entry name" value="RIBOSOMAL_L20"/>
    <property type="match status" value="1"/>
</dbReference>
<keyword id="KW-1185">Reference proteome</keyword>
<keyword id="KW-0687">Ribonucleoprotein</keyword>
<keyword id="KW-0689">Ribosomal protein</keyword>
<keyword id="KW-0694">RNA-binding</keyword>
<keyword id="KW-0699">rRNA-binding</keyword>
<comment type="function">
    <text evidence="1">Binds directly to 23S ribosomal RNA and is necessary for the in vitro assembly process of the 50S ribosomal subunit. It is not involved in the protein synthesizing functions of that subunit (By similarity).</text>
</comment>
<comment type="similarity">
    <text evidence="2">Belongs to the bacterial ribosomal protein bL20 family.</text>
</comment>
<reference key="1">
    <citation type="journal article" date="1998" name="Science">
        <title>Genome sequence of an obligate intracellular pathogen of humans: Chlamydia trachomatis.</title>
        <authorList>
            <person name="Stephens R.S."/>
            <person name="Kalman S."/>
            <person name="Lammel C.J."/>
            <person name="Fan J."/>
            <person name="Marathe R."/>
            <person name="Aravind L."/>
            <person name="Mitchell W.P."/>
            <person name="Olinger L."/>
            <person name="Tatusov R.L."/>
            <person name="Zhao Q."/>
            <person name="Koonin E.V."/>
            <person name="Davis R.W."/>
        </authorList>
    </citation>
    <scope>NUCLEOTIDE SEQUENCE [LARGE SCALE GENOMIC DNA]</scope>
    <source>
        <strain>ATCC VR-885 / DSM 19411 / UW-3/Cx</strain>
    </source>
</reference>
<gene>
    <name type="primary">rplT</name>
    <name type="synonym">rl20</name>
    <name type="ordered locus">CT_835</name>
</gene>
<protein>
    <recommendedName>
        <fullName evidence="2">Large ribosomal subunit protein bL20</fullName>
    </recommendedName>
    <alternativeName>
        <fullName>50S ribosomal protein L20</fullName>
    </alternativeName>
</protein>
<sequence>MVRATGSVASRSRRKRVLKQAKGFWGDRKGHFRQSRSSVMRAMAFNYMHRKDRKGDFRSLWITRLSVASRIHGLSYSRLINGLKQAGIHLNRKMLSEMAIHDPQGFAVVATQAKLALEAAVQG</sequence>
<name>RL20_CHLTR</name>
<feature type="chain" id="PRO_0000177144" description="Large ribosomal subunit protein bL20">
    <location>
        <begin position="1"/>
        <end position="123"/>
    </location>
</feature>